<keyword id="KW-0002">3D-structure</keyword>
<keyword id="KW-0456">Lyase</keyword>
<keyword id="KW-0659">Purine metabolism</keyword>
<keyword id="KW-1185">Reference proteome</keyword>
<proteinExistence type="evidence at protein level"/>
<sequence length="167" mass="18768">MRTLMIEPLTKEAFAQFGDVIETDGSDHFMINNGSTMRFHKLATVETAEPEDKAIISIFRADAQDMPLTVRMLERHPLGSQAFIPLLGNPFLIVVAPVGDAPVSGLVRAFRSNGRQGVNYHRGVWHHPVLTIEKRDDFLVVDRSGSGNNCDEHYFTEEQMLILNPHQ</sequence>
<accession>P59285</accession>
<reference key="1">
    <citation type="journal article" date="2002" name="Environ. Microbiol.">
        <title>Complete genome sequence and comparative analysis of the metabolically versatile Pseudomonas putida KT2440.</title>
        <authorList>
            <person name="Nelson K.E."/>
            <person name="Weinel C."/>
            <person name="Paulsen I.T."/>
            <person name="Dodson R.J."/>
            <person name="Hilbert H."/>
            <person name="Martins dos Santos V.A.P."/>
            <person name="Fouts D.E."/>
            <person name="Gill S.R."/>
            <person name="Pop M."/>
            <person name="Holmes M."/>
            <person name="Brinkac L.M."/>
            <person name="Beanan M.J."/>
            <person name="DeBoy R.T."/>
            <person name="Daugherty S.C."/>
            <person name="Kolonay J.F."/>
            <person name="Madupu R."/>
            <person name="Nelson W.C."/>
            <person name="White O."/>
            <person name="Peterson J.D."/>
            <person name="Khouri H.M."/>
            <person name="Hance I."/>
            <person name="Chris Lee P."/>
            <person name="Holtzapple E.K."/>
            <person name="Scanlan D."/>
            <person name="Tran K."/>
            <person name="Moazzez A."/>
            <person name="Utterback T.R."/>
            <person name="Rizzo M."/>
            <person name="Lee K."/>
            <person name="Kosack D."/>
            <person name="Moestl D."/>
            <person name="Wedler H."/>
            <person name="Lauber J."/>
            <person name="Stjepandic D."/>
            <person name="Hoheisel J."/>
            <person name="Straetz M."/>
            <person name="Heim S."/>
            <person name="Kiewitz C."/>
            <person name="Eisen J.A."/>
            <person name="Timmis K.N."/>
            <person name="Duesterhoeft A."/>
            <person name="Tuemmler B."/>
            <person name="Fraser C.M."/>
        </authorList>
    </citation>
    <scope>NUCLEOTIDE SEQUENCE [LARGE SCALE GENOMIC DNA]</scope>
    <source>
        <strain>ATCC 47054 / DSM 6125 / CFBP 8728 / NCIMB 11950 / KT2440</strain>
    </source>
</reference>
<reference key="2">
    <citation type="submission" date="2005-11" db="PDB data bank">
        <title>Crystal structure of the putative ureidoglycolate hydrolase pp4288 from Pseudomonas putida, Northeast structural genomics target Ppr49.</title>
        <authorList>
            <consortium name="Northeast structural genomics consortium (NESG)"/>
        </authorList>
    </citation>
    <scope>X-RAY CRYSTALLOGRAPHY (1.6 ANGSTROMS)</scope>
    <scope>SUBUNIT</scope>
</reference>
<feature type="chain" id="PRO_0000120551" description="Ureidoglycolate lyase">
    <location>
        <begin position="1"/>
        <end position="167"/>
    </location>
</feature>
<feature type="strand" evidence="3">
    <location>
        <begin position="6"/>
        <end position="8"/>
    </location>
</feature>
<feature type="helix" evidence="3">
    <location>
        <begin position="11"/>
        <end position="14"/>
    </location>
</feature>
<feature type="turn" evidence="3">
    <location>
        <begin position="15"/>
        <end position="17"/>
    </location>
</feature>
<feature type="strand" evidence="3">
    <location>
        <begin position="18"/>
        <end position="21"/>
    </location>
</feature>
<feature type="strand" evidence="3">
    <location>
        <begin position="29"/>
        <end position="31"/>
    </location>
</feature>
<feature type="turn" evidence="3">
    <location>
        <begin position="32"/>
        <end position="35"/>
    </location>
</feature>
<feature type="strand" evidence="3">
    <location>
        <begin position="36"/>
        <end position="45"/>
    </location>
</feature>
<feature type="strand" evidence="3">
    <location>
        <begin position="47"/>
        <end position="49"/>
    </location>
</feature>
<feature type="strand" evidence="3">
    <location>
        <begin position="53"/>
        <end position="62"/>
    </location>
</feature>
<feature type="strand" evidence="3">
    <location>
        <begin position="66"/>
        <end position="70"/>
    </location>
</feature>
<feature type="strand" evidence="3">
    <location>
        <begin position="72"/>
        <end position="75"/>
    </location>
</feature>
<feature type="strand" evidence="3">
    <location>
        <begin position="81"/>
        <end position="87"/>
    </location>
</feature>
<feature type="strand" evidence="3">
    <location>
        <begin position="91"/>
        <end position="96"/>
    </location>
</feature>
<feature type="strand" evidence="3">
    <location>
        <begin position="98"/>
        <end position="101"/>
    </location>
</feature>
<feature type="helix" evidence="3">
    <location>
        <begin position="104"/>
        <end position="106"/>
    </location>
</feature>
<feature type="strand" evidence="3">
    <location>
        <begin position="108"/>
        <end position="112"/>
    </location>
</feature>
<feature type="strand" evidence="3">
    <location>
        <begin position="117"/>
        <end position="120"/>
    </location>
</feature>
<feature type="strand" evidence="3">
    <location>
        <begin position="130"/>
        <end position="144"/>
    </location>
</feature>
<feature type="strand" evidence="3">
    <location>
        <begin position="151"/>
        <end position="154"/>
    </location>
</feature>
<feature type="helix" evidence="3">
    <location>
        <begin position="157"/>
        <end position="159"/>
    </location>
</feature>
<feature type="strand" evidence="3">
    <location>
        <begin position="161"/>
        <end position="163"/>
    </location>
</feature>
<name>ALLA_PSEPK</name>
<dbReference type="EC" id="4.3.2.3" evidence="1"/>
<dbReference type="EMBL" id="AE015451">
    <property type="protein sequence ID" value="AAN69868.1"/>
    <property type="molecule type" value="Genomic_DNA"/>
</dbReference>
<dbReference type="RefSeq" id="NP_746404.1">
    <property type="nucleotide sequence ID" value="NC_002947.4"/>
</dbReference>
<dbReference type="RefSeq" id="WP_003254333.1">
    <property type="nucleotide sequence ID" value="NZ_CP169744.1"/>
</dbReference>
<dbReference type="PDB" id="2BDR">
    <property type="method" value="X-ray"/>
    <property type="resolution" value="1.60 A"/>
    <property type="chains" value="A/B=1-167"/>
</dbReference>
<dbReference type="PDBsum" id="2BDR"/>
<dbReference type="SMR" id="P59285"/>
<dbReference type="STRING" id="160488.PP_4288"/>
<dbReference type="PaxDb" id="160488-PP_4288"/>
<dbReference type="KEGG" id="ppu:PP_4288"/>
<dbReference type="PATRIC" id="fig|160488.4.peg.4560"/>
<dbReference type="eggNOG" id="COG3194">
    <property type="taxonomic scope" value="Bacteria"/>
</dbReference>
<dbReference type="HOGENOM" id="CLU_070848_1_0_6"/>
<dbReference type="OrthoDB" id="9804602at2"/>
<dbReference type="PhylomeDB" id="P59285"/>
<dbReference type="BioCyc" id="PPUT160488:G1G01-4566-MONOMER"/>
<dbReference type="UniPathway" id="UPA00395"/>
<dbReference type="EvolutionaryTrace" id="P59285"/>
<dbReference type="Proteomes" id="UP000000556">
    <property type="component" value="Chromosome"/>
</dbReference>
<dbReference type="GO" id="GO:0004848">
    <property type="term" value="F:ureidoglycolate hydrolase activity"/>
    <property type="evidence" value="ECO:0007669"/>
    <property type="project" value="InterPro"/>
</dbReference>
<dbReference type="GO" id="GO:0050385">
    <property type="term" value="F:ureidoglycolate lyase activity"/>
    <property type="evidence" value="ECO:0007669"/>
    <property type="project" value="UniProtKB-UniRule"/>
</dbReference>
<dbReference type="GO" id="GO:0000256">
    <property type="term" value="P:allantoin catabolic process"/>
    <property type="evidence" value="ECO:0007669"/>
    <property type="project" value="UniProtKB-UniRule"/>
</dbReference>
<dbReference type="GO" id="GO:0006145">
    <property type="term" value="P:purine nucleobase catabolic process"/>
    <property type="evidence" value="ECO:0007669"/>
    <property type="project" value="UniProtKB-UniRule"/>
</dbReference>
<dbReference type="CDD" id="cd20298">
    <property type="entry name" value="cupin_UAH"/>
    <property type="match status" value="1"/>
</dbReference>
<dbReference type="Gene3D" id="2.60.120.480">
    <property type="entry name" value="Ureidoglycolate hydrolase"/>
    <property type="match status" value="1"/>
</dbReference>
<dbReference type="HAMAP" id="MF_00616">
    <property type="entry name" value="Ureidogly_lyase"/>
    <property type="match status" value="1"/>
</dbReference>
<dbReference type="InterPro" id="IPR011051">
    <property type="entry name" value="RmlC_Cupin_sf"/>
</dbReference>
<dbReference type="InterPro" id="IPR047233">
    <property type="entry name" value="UAH_cupin"/>
</dbReference>
<dbReference type="InterPro" id="IPR007247">
    <property type="entry name" value="Ureidogly_lyase"/>
</dbReference>
<dbReference type="InterPro" id="IPR023525">
    <property type="entry name" value="Ureidogly_lyase_bac"/>
</dbReference>
<dbReference type="InterPro" id="IPR024060">
    <property type="entry name" value="Ureidoglycolate_lyase_dom_sf"/>
</dbReference>
<dbReference type="NCBIfam" id="NF002949">
    <property type="entry name" value="PRK03606.1-2"/>
    <property type="match status" value="1"/>
</dbReference>
<dbReference type="NCBIfam" id="NF009932">
    <property type="entry name" value="PRK13395.1"/>
    <property type="match status" value="1"/>
</dbReference>
<dbReference type="PANTHER" id="PTHR21221">
    <property type="entry name" value="UREIDOGLYCOLATE HYDROLASE"/>
    <property type="match status" value="1"/>
</dbReference>
<dbReference type="PANTHER" id="PTHR21221:SF1">
    <property type="entry name" value="UREIDOGLYCOLATE LYASE"/>
    <property type="match status" value="1"/>
</dbReference>
<dbReference type="Pfam" id="PF04115">
    <property type="entry name" value="Ureidogly_lyase"/>
    <property type="match status" value="1"/>
</dbReference>
<dbReference type="PIRSF" id="PIRSF017306">
    <property type="entry name" value="Ureidogly_hydro"/>
    <property type="match status" value="1"/>
</dbReference>
<dbReference type="SUPFAM" id="SSF51182">
    <property type="entry name" value="RmlC-like cupins"/>
    <property type="match status" value="1"/>
</dbReference>
<comment type="function">
    <text evidence="1">Catalyzes the catabolism of the allantoin degradation intermediate (S)-ureidoglycolate, generating urea and glyoxylate. Involved in the utilization of allantoin as nitrogen source.</text>
</comment>
<comment type="catalytic activity">
    <reaction evidence="1">
        <text>(S)-ureidoglycolate = urea + glyoxylate</text>
        <dbReference type="Rhea" id="RHEA:11304"/>
        <dbReference type="ChEBI" id="CHEBI:16199"/>
        <dbReference type="ChEBI" id="CHEBI:36655"/>
        <dbReference type="ChEBI" id="CHEBI:57296"/>
        <dbReference type="EC" id="4.3.2.3"/>
    </reaction>
</comment>
<comment type="cofactor">
    <cofactor evidence="1">
        <name>Ni(2+)</name>
        <dbReference type="ChEBI" id="CHEBI:49786"/>
    </cofactor>
</comment>
<comment type="pathway">
    <text evidence="1">Nitrogen metabolism; (S)-allantoin degradation.</text>
</comment>
<comment type="subunit">
    <text evidence="1 2">Homodimer.</text>
</comment>
<comment type="similarity">
    <text evidence="1">Belongs to the ureidoglycolate lyase family.</text>
</comment>
<protein>
    <recommendedName>
        <fullName evidence="1">Ureidoglycolate lyase</fullName>
        <ecNumber evidence="1">4.3.2.3</ecNumber>
    </recommendedName>
    <alternativeName>
        <fullName evidence="1">Ureidoglycolatase</fullName>
    </alternativeName>
</protein>
<gene>
    <name evidence="1" type="primary">allA</name>
    <name type="ordered locus">PP_4288</name>
</gene>
<evidence type="ECO:0000255" key="1">
    <source>
        <dbReference type="HAMAP-Rule" id="MF_00616"/>
    </source>
</evidence>
<evidence type="ECO:0000269" key="2">
    <source ref="2"/>
</evidence>
<evidence type="ECO:0007829" key="3">
    <source>
        <dbReference type="PDB" id="2BDR"/>
    </source>
</evidence>
<organism>
    <name type="scientific">Pseudomonas putida (strain ATCC 47054 / DSM 6125 / CFBP 8728 / NCIMB 11950 / KT2440)</name>
    <dbReference type="NCBI Taxonomy" id="160488"/>
    <lineage>
        <taxon>Bacteria</taxon>
        <taxon>Pseudomonadati</taxon>
        <taxon>Pseudomonadota</taxon>
        <taxon>Gammaproteobacteria</taxon>
        <taxon>Pseudomonadales</taxon>
        <taxon>Pseudomonadaceae</taxon>
        <taxon>Pseudomonas</taxon>
    </lineage>
</organism>